<dbReference type="EMBL" id="CP001089">
    <property type="protein sequence ID" value="ACD95080.1"/>
    <property type="molecule type" value="Genomic_DNA"/>
</dbReference>
<dbReference type="RefSeq" id="WP_012469425.1">
    <property type="nucleotide sequence ID" value="NC_010814.1"/>
</dbReference>
<dbReference type="SMR" id="B3E7U8"/>
<dbReference type="STRING" id="398767.Glov_1359"/>
<dbReference type="KEGG" id="glo:Glov_1359"/>
<dbReference type="eggNOG" id="COG0199">
    <property type="taxonomic scope" value="Bacteria"/>
</dbReference>
<dbReference type="HOGENOM" id="CLU_139869_3_0_7"/>
<dbReference type="OrthoDB" id="9810484at2"/>
<dbReference type="Proteomes" id="UP000002420">
    <property type="component" value="Chromosome"/>
</dbReference>
<dbReference type="GO" id="GO:0005737">
    <property type="term" value="C:cytoplasm"/>
    <property type="evidence" value="ECO:0007669"/>
    <property type="project" value="UniProtKB-ARBA"/>
</dbReference>
<dbReference type="GO" id="GO:0015935">
    <property type="term" value="C:small ribosomal subunit"/>
    <property type="evidence" value="ECO:0007669"/>
    <property type="project" value="TreeGrafter"/>
</dbReference>
<dbReference type="GO" id="GO:0019843">
    <property type="term" value="F:rRNA binding"/>
    <property type="evidence" value="ECO:0007669"/>
    <property type="project" value="UniProtKB-UniRule"/>
</dbReference>
<dbReference type="GO" id="GO:0003735">
    <property type="term" value="F:structural constituent of ribosome"/>
    <property type="evidence" value="ECO:0007669"/>
    <property type="project" value="InterPro"/>
</dbReference>
<dbReference type="GO" id="GO:0008270">
    <property type="term" value="F:zinc ion binding"/>
    <property type="evidence" value="ECO:0007669"/>
    <property type="project" value="UniProtKB-UniRule"/>
</dbReference>
<dbReference type="GO" id="GO:0006412">
    <property type="term" value="P:translation"/>
    <property type="evidence" value="ECO:0007669"/>
    <property type="project" value="UniProtKB-UniRule"/>
</dbReference>
<dbReference type="FunFam" id="4.10.830.10:FF:000001">
    <property type="entry name" value="30S ribosomal protein S14 type Z"/>
    <property type="match status" value="1"/>
</dbReference>
<dbReference type="Gene3D" id="4.10.830.10">
    <property type="entry name" value="30s Ribosomal Protein S14, Chain N"/>
    <property type="match status" value="1"/>
</dbReference>
<dbReference type="HAMAP" id="MF_01364_B">
    <property type="entry name" value="Ribosomal_uS14_2_B"/>
    <property type="match status" value="1"/>
</dbReference>
<dbReference type="InterPro" id="IPR001209">
    <property type="entry name" value="Ribosomal_uS14"/>
</dbReference>
<dbReference type="InterPro" id="IPR023053">
    <property type="entry name" value="Ribosomal_uS14_bact"/>
</dbReference>
<dbReference type="InterPro" id="IPR018271">
    <property type="entry name" value="Ribosomal_uS14_CS"/>
</dbReference>
<dbReference type="InterPro" id="IPR043140">
    <property type="entry name" value="Ribosomal_uS14_sf"/>
</dbReference>
<dbReference type="NCBIfam" id="NF005974">
    <property type="entry name" value="PRK08061.1"/>
    <property type="match status" value="1"/>
</dbReference>
<dbReference type="PANTHER" id="PTHR19836">
    <property type="entry name" value="30S RIBOSOMAL PROTEIN S14"/>
    <property type="match status" value="1"/>
</dbReference>
<dbReference type="PANTHER" id="PTHR19836:SF19">
    <property type="entry name" value="SMALL RIBOSOMAL SUBUNIT PROTEIN US14M"/>
    <property type="match status" value="1"/>
</dbReference>
<dbReference type="Pfam" id="PF00253">
    <property type="entry name" value="Ribosomal_S14"/>
    <property type="match status" value="1"/>
</dbReference>
<dbReference type="SUPFAM" id="SSF57716">
    <property type="entry name" value="Glucocorticoid receptor-like (DNA-binding domain)"/>
    <property type="match status" value="1"/>
</dbReference>
<dbReference type="PROSITE" id="PS00527">
    <property type="entry name" value="RIBOSOMAL_S14"/>
    <property type="match status" value="1"/>
</dbReference>
<keyword id="KW-0479">Metal-binding</keyword>
<keyword id="KW-1185">Reference proteome</keyword>
<keyword id="KW-0687">Ribonucleoprotein</keyword>
<keyword id="KW-0689">Ribosomal protein</keyword>
<keyword id="KW-0694">RNA-binding</keyword>
<keyword id="KW-0699">rRNA-binding</keyword>
<keyword id="KW-0862">Zinc</keyword>
<protein>
    <recommendedName>
        <fullName evidence="1">Small ribosomal subunit protein uS14</fullName>
    </recommendedName>
    <alternativeName>
        <fullName evidence="2">30S ribosomal protein S14 type Z</fullName>
    </alternativeName>
</protein>
<proteinExistence type="inferred from homology"/>
<evidence type="ECO:0000255" key="1">
    <source>
        <dbReference type="HAMAP-Rule" id="MF_01364"/>
    </source>
</evidence>
<evidence type="ECO:0000305" key="2"/>
<feature type="chain" id="PRO_1000143905" description="Small ribosomal subunit protein uS14">
    <location>
        <begin position="1"/>
        <end position="61"/>
    </location>
</feature>
<feature type="binding site" evidence="1">
    <location>
        <position position="24"/>
    </location>
    <ligand>
        <name>Zn(2+)</name>
        <dbReference type="ChEBI" id="CHEBI:29105"/>
    </ligand>
</feature>
<feature type="binding site" evidence="1">
    <location>
        <position position="27"/>
    </location>
    <ligand>
        <name>Zn(2+)</name>
        <dbReference type="ChEBI" id="CHEBI:29105"/>
    </ligand>
</feature>
<feature type="binding site" evidence="1">
    <location>
        <position position="40"/>
    </location>
    <ligand>
        <name>Zn(2+)</name>
        <dbReference type="ChEBI" id="CHEBI:29105"/>
    </ligand>
</feature>
<feature type="binding site" evidence="1">
    <location>
        <position position="43"/>
    </location>
    <ligand>
        <name>Zn(2+)</name>
        <dbReference type="ChEBI" id="CHEBI:29105"/>
    </ligand>
</feature>
<sequence length="61" mass="7118">MAKVSMINKSQRTPKFKVRQHNRCPVCGRPKAFYRKFQMCRICLRKYASAGQIPGVIKSSW</sequence>
<organism>
    <name type="scientific">Trichlorobacter lovleyi (strain ATCC BAA-1151 / DSM 17278 / SZ)</name>
    <name type="common">Geobacter lovleyi</name>
    <dbReference type="NCBI Taxonomy" id="398767"/>
    <lineage>
        <taxon>Bacteria</taxon>
        <taxon>Pseudomonadati</taxon>
        <taxon>Thermodesulfobacteriota</taxon>
        <taxon>Desulfuromonadia</taxon>
        <taxon>Geobacterales</taxon>
        <taxon>Geobacteraceae</taxon>
        <taxon>Trichlorobacter</taxon>
    </lineage>
</organism>
<comment type="function">
    <text evidence="1">Binds 16S rRNA, required for the assembly of 30S particles and may also be responsible for determining the conformation of the 16S rRNA at the A site.</text>
</comment>
<comment type="cofactor">
    <cofactor evidence="1">
        <name>Zn(2+)</name>
        <dbReference type="ChEBI" id="CHEBI:29105"/>
    </cofactor>
    <text evidence="1">Binds 1 zinc ion per subunit.</text>
</comment>
<comment type="subunit">
    <text evidence="1">Part of the 30S ribosomal subunit. Contacts proteins S3 and S10.</text>
</comment>
<comment type="similarity">
    <text evidence="1">Belongs to the universal ribosomal protein uS14 family. Zinc-binding uS14 subfamily.</text>
</comment>
<name>RS14Z_TRIL1</name>
<accession>B3E7U8</accession>
<reference key="1">
    <citation type="submission" date="2008-05" db="EMBL/GenBank/DDBJ databases">
        <title>Complete sequence of chromosome of Geobacter lovleyi SZ.</title>
        <authorList>
            <consortium name="US DOE Joint Genome Institute"/>
            <person name="Lucas S."/>
            <person name="Copeland A."/>
            <person name="Lapidus A."/>
            <person name="Glavina del Rio T."/>
            <person name="Dalin E."/>
            <person name="Tice H."/>
            <person name="Bruce D."/>
            <person name="Goodwin L."/>
            <person name="Pitluck S."/>
            <person name="Chertkov O."/>
            <person name="Meincke L."/>
            <person name="Brettin T."/>
            <person name="Detter J.C."/>
            <person name="Han C."/>
            <person name="Tapia R."/>
            <person name="Kuske C.R."/>
            <person name="Schmutz J."/>
            <person name="Larimer F."/>
            <person name="Land M."/>
            <person name="Hauser L."/>
            <person name="Kyrpides N."/>
            <person name="Mikhailova N."/>
            <person name="Sung Y."/>
            <person name="Fletcher K.E."/>
            <person name="Ritalahti K.M."/>
            <person name="Loeffler F.E."/>
            <person name="Richardson P."/>
        </authorList>
    </citation>
    <scope>NUCLEOTIDE SEQUENCE [LARGE SCALE GENOMIC DNA]</scope>
    <source>
        <strain>ATCC BAA-1151 / DSM 17278 / SZ</strain>
    </source>
</reference>
<gene>
    <name evidence="1" type="primary">rpsZ</name>
    <name evidence="1" type="synonym">rpsN</name>
    <name type="ordered locus">Glov_1359</name>
</gene>